<reference key="1">
    <citation type="journal article" date="2005" name="Nature">
        <title>Sequencing of Aspergillus nidulans and comparative analysis with A. fumigatus and A. oryzae.</title>
        <authorList>
            <person name="Galagan J.E."/>
            <person name="Calvo S.E."/>
            <person name="Cuomo C."/>
            <person name="Ma L.-J."/>
            <person name="Wortman J.R."/>
            <person name="Batzoglou S."/>
            <person name="Lee S.-I."/>
            <person name="Bastuerkmen M."/>
            <person name="Spevak C.C."/>
            <person name="Clutterbuck J."/>
            <person name="Kapitonov V."/>
            <person name="Jurka J."/>
            <person name="Scazzocchio C."/>
            <person name="Farman M.L."/>
            <person name="Butler J."/>
            <person name="Purcell S."/>
            <person name="Harris S."/>
            <person name="Braus G.H."/>
            <person name="Draht O."/>
            <person name="Busch S."/>
            <person name="D'Enfert C."/>
            <person name="Bouchier C."/>
            <person name="Goldman G.H."/>
            <person name="Bell-Pedersen D."/>
            <person name="Griffiths-Jones S."/>
            <person name="Doonan J.H."/>
            <person name="Yu J."/>
            <person name="Vienken K."/>
            <person name="Pain A."/>
            <person name="Freitag M."/>
            <person name="Selker E.U."/>
            <person name="Archer D.B."/>
            <person name="Penalva M.A."/>
            <person name="Oakley B.R."/>
            <person name="Momany M."/>
            <person name="Tanaka T."/>
            <person name="Kumagai T."/>
            <person name="Asai K."/>
            <person name="Machida M."/>
            <person name="Nierman W.C."/>
            <person name="Denning D.W."/>
            <person name="Caddick M.X."/>
            <person name="Hynes M."/>
            <person name="Paoletti M."/>
            <person name="Fischer R."/>
            <person name="Miller B.L."/>
            <person name="Dyer P.S."/>
            <person name="Sachs M.S."/>
            <person name="Osmani S.A."/>
            <person name="Birren B.W."/>
        </authorList>
    </citation>
    <scope>NUCLEOTIDE SEQUENCE [LARGE SCALE GENOMIC DNA]</scope>
    <source>
        <strain>FGSC A4 / ATCC 38163 / CBS 112.46 / NRRL 194 / M139</strain>
    </source>
</reference>
<reference key="2">
    <citation type="journal article" date="2009" name="Fungal Genet. Biol.">
        <title>The 2008 update of the Aspergillus nidulans genome annotation: a community effort.</title>
        <authorList>
            <person name="Wortman J.R."/>
            <person name="Gilsenan J.M."/>
            <person name="Joardar V."/>
            <person name="Deegan J."/>
            <person name="Clutterbuck J."/>
            <person name="Andersen M.R."/>
            <person name="Archer D."/>
            <person name="Bencina M."/>
            <person name="Braus G."/>
            <person name="Coutinho P."/>
            <person name="von Dohren H."/>
            <person name="Doonan J."/>
            <person name="Driessen A.J."/>
            <person name="Durek P."/>
            <person name="Espeso E."/>
            <person name="Fekete E."/>
            <person name="Flipphi M."/>
            <person name="Estrada C.G."/>
            <person name="Geysens S."/>
            <person name="Goldman G."/>
            <person name="de Groot P.W."/>
            <person name="Hansen K."/>
            <person name="Harris S.D."/>
            <person name="Heinekamp T."/>
            <person name="Helmstaedt K."/>
            <person name="Henrissat B."/>
            <person name="Hofmann G."/>
            <person name="Homan T."/>
            <person name="Horio T."/>
            <person name="Horiuchi H."/>
            <person name="James S."/>
            <person name="Jones M."/>
            <person name="Karaffa L."/>
            <person name="Karanyi Z."/>
            <person name="Kato M."/>
            <person name="Keller N."/>
            <person name="Kelly D.E."/>
            <person name="Kiel J.A."/>
            <person name="Kim J.M."/>
            <person name="van der Klei I.J."/>
            <person name="Klis F.M."/>
            <person name="Kovalchuk A."/>
            <person name="Krasevec N."/>
            <person name="Kubicek C.P."/>
            <person name="Liu B."/>
            <person name="Maccabe A."/>
            <person name="Meyer V."/>
            <person name="Mirabito P."/>
            <person name="Miskei M."/>
            <person name="Mos M."/>
            <person name="Mullins J."/>
            <person name="Nelson D.R."/>
            <person name="Nielsen J."/>
            <person name="Oakley B.R."/>
            <person name="Osmani S.A."/>
            <person name="Pakula T."/>
            <person name="Paszewski A."/>
            <person name="Paulsen I."/>
            <person name="Pilsyk S."/>
            <person name="Pocsi I."/>
            <person name="Punt P.J."/>
            <person name="Ram A.F."/>
            <person name="Ren Q."/>
            <person name="Robellet X."/>
            <person name="Robson G."/>
            <person name="Seiboth B."/>
            <person name="van Solingen P."/>
            <person name="Specht T."/>
            <person name="Sun J."/>
            <person name="Taheri-Talesh N."/>
            <person name="Takeshita N."/>
            <person name="Ussery D."/>
            <person name="vanKuyk P.A."/>
            <person name="Visser H."/>
            <person name="van de Vondervoort P.J."/>
            <person name="de Vries R.P."/>
            <person name="Walton J."/>
            <person name="Xiang X."/>
            <person name="Xiong Y."/>
            <person name="Zeng A.P."/>
            <person name="Brandt B.W."/>
            <person name="Cornell M.J."/>
            <person name="van den Hondel C.A."/>
            <person name="Visser J."/>
            <person name="Oliver S.G."/>
            <person name="Turner G."/>
        </authorList>
    </citation>
    <scope>GENOME REANNOTATION</scope>
    <source>
        <strain>FGSC A4 / ATCC 38163 / CBS 112.46 / NRRL 194 / M139</strain>
    </source>
</reference>
<gene>
    <name type="ORF">AN11015</name>
    <name type="ORF">AN7784</name>
</gene>
<proteinExistence type="inferred from homology"/>
<name>GFA_EMENI</name>
<organism>
    <name type="scientific">Emericella nidulans (strain FGSC A4 / ATCC 38163 / CBS 112.46 / NRRL 194 / M139)</name>
    <name type="common">Aspergillus nidulans</name>
    <dbReference type="NCBI Taxonomy" id="227321"/>
    <lineage>
        <taxon>Eukaryota</taxon>
        <taxon>Fungi</taxon>
        <taxon>Dikarya</taxon>
        <taxon>Ascomycota</taxon>
        <taxon>Pezizomycotina</taxon>
        <taxon>Eurotiomycetes</taxon>
        <taxon>Eurotiomycetidae</taxon>
        <taxon>Eurotiales</taxon>
        <taxon>Aspergillaceae</taxon>
        <taxon>Aspergillus</taxon>
        <taxon>Aspergillus subgen. Nidulantes</taxon>
    </lineage>
</organism>
<protein>
    <recommendedName>
        <fullName evidence="1">Putative glutathione-dependent formaldehyde-activating enzyme</fullName>
        <ecNumber evidence="1">4.4.1.22</ecNumber>
    </recommendedName>
    <alternativeName>
        <fullName evidence="1">S-(hydroxymethyl)glutathione synthase</fullName>
    </alternativeName>
</protein>
<evidence type="ECO:0000255" key="1">
    <source>
        <dbReference type="HAMAP-Rule" id="MF_03142"/>
    </source>
</evidence>
<evidence type="ECO:0000255" key="2">
    <source>
        <dbReference type="PROSITE-ProRule" id="PRU01239"/>
    </source>
</evidence>
<evidence type="ECO:0000305" key="3"/>
<keyword id="KW-0456">Lyase</keyword>
<keyword id="KW-0479">Metal-binding</keyword>
<keyword id="KW-1185">Reference proteome</keyword>
<keyword id="KW-0862">Zinc</keyword>
<dbReference type="EC" id="4.4.1.22" evidence="1"/>
<dbReference type="EMBL" id="AACD01000132">
    <property type="protein sequence ID" value="EAA61572.1"/>
    <property type="status" value="ALT_SEQ"/>
    <property type="molecule type" value="Genomic_DNA"/>
</dbReference>
<dbReference type="EMBL" id="BN001304">
    <property type="protein sequence ID" value="CBF80099.1"/>
    <property type="molecule type" value="Genomic_DNA"/>
</dbReference>
<dbReference type="SMR" id="C8VDQ3"/>
<dbReference type="EnsemblFungi" id="CBF80099">
    <property type="protein sequence ID" value="CBF80099"/>
    <property type="gene ID" value="ANIA_11015"/>
</dbReference>
<dbReference type="VEuPathDB" id="FungiDB:AN11015"/>
<dbReference type="eggNOG" id="ENOG502SKH9">
    <property type="taxonomic scope" value="Eukaryota"/>
</dbReference>
<dbReference type="HOGENOM" id="CLU_003538_1_0_1"/>
<dbReference type="InParanoid" id="C8VDQ3"/>
<dbReference type="OMA" id="ECGTHMY"/>
<dbReference type="OrthoDB" id="3446116at2759"/>
<dbReference type="UniPathway" id="UPA00562">
    <property type="reaction ID" value="UER00621"/>
</dbReference>
<dbReference type="Proteomes" id="UP000000560">
    <property type="component" value="Chromosome IV"/>
</dbReference>
<dbReference type="GO" id="GO:0051907">
    <property type="term" value="F:S-(hydroxymethyl)glutathione synthase activity"/>
    <property type="evidence" value="ECO:0007669"/>
    <property type="project" value="UniProtKB-UniRule"/>
</dbReference>
<dbReference type="GO" id="GO:0008270">
    <property type="term" value="F:zinc ion binding"/>
    <property type="evidence" value="ECO:0007669"/>
    <property type="project" value="UniProtKB-UniRule"/>
</dbReference>
<dbReference type="GO" id="GO:0046294">
    <property type="term" value="P:formaldehyde catabolic process"/>
    <property type="evidence" value="ECO:0007669"/>
    <property type="project" value="UniProtKB-UniRule"/>
</dbReference>
<dbReference type="Gene3D" id="3.90.1590.10">
    <property type="entry name" value="glutathione-dependent formaldehyde- activating enzyme (gfa)"/>
    <property type="match status" value="1"/>
</dbReference>
<dbReference type="HAMAP" id="MF_00723">
    <property type="entry name" value="Formald_GSH"/>
    <property type="match status" value="1"/>
</dbReference>
<dbReference type="InterPro" id="IPR006913">
    <property type="entry name" value="CENP-V/GFA"/>
</dbReference>
<dbReference type="InterPro" id="IPR014185">
    <property type="entry name" value="Formald_GSH"/>
</dbReference>
<dbReference type="InterPro" id="IPR011057">
    <property type="entry name" value="Mss4-like_sf"/>
</dbReference>
<dbReference type="NCBIfam" id="TIGR02820">
    <property type="entry name" value="formald_GSH"/>
    <property type="match status" value="1"/>
</dbReference>
<dbReference type="NCBIfam" id="NF003829">
    <property type="entry name" value="PRK05417.1"/>
    <property type="match status" value="1"/>
</dbReference>
<dbReference type="PANTHER" id="PTHR33337:SF40">
    <property type="entry name" value="CENP-V_GFA DOMAIN-CONTAINING PROTEIN-RELATED"/>
    <property type="match status" value="1"/>
</dbReference>
<dbReference type="PANTHER" id="PTHR33337">
    <property type="entry name" value="GFA DOMAIN-CONTAINING PROTEIN"/>
    <property type="match status" value="1"/>
</dbReference>
<dbReference type="Pfam" id="PF04828">
    <property type="entry name" value="GFA"/>
    <property type="match status" value="1"/>
</dbReference>
<dbReference type="PIRSF" id="PIRSF033318">
    <property type="entry name" value="Formald_GSH"/>
    <property type="match status" value="1"/>
</dbReference>
<dbReference type="SUPFAM" id="SSF51316">
    <property type="entry name" value="Mss4-like"/>
    <property type="match status" value="1"/>
</dbReference>
<dbReference type="PROSITE" id="PS51891">
    <property type="entry name" value="CENP_V_GFA"/>
    <property type="match status" value="1"/>
</dbReference>
<sequence length="197" mass="21100">MSSSLPLHPLLDNGISQGKPNFPGGKLYCHCASNKVEITLTSDVLHNHACGCSKCWKPKGSIFSVVGVVPTSALSVTANASKLAIIDKNAPIQRYACKECGVHLYGRIEVEHPFKGLDFVHVELSEGGGKEGWQGVQFAGFVSSLIGQGLDPELVPGVRERLKSLGLENYDALSPPLMDAIATWNAKRDGVVFRSSL</sequence>
<comment type="function">
    <text evidence="1">Catalyzes the condensation of formaldehyde and glutathione to S-hydroxymethylglutathione.</text>
</comment>
<comment type="catalytic activity">
    <reaction evidence="1">
        <text>S-(hydroxymethyl)glutathione = glutathione + formaldehyde</text>
        <dbReference type="Rhea" id="RHEA:22488"/>
        <dbReference type="ChEBI" id="CHEBI:16842"/>
        <dbReference type="ChEBI" id="CHEBI:57925"/>
        <dbReference type="ChEBI" id="CHEBI:58758"/>
        <dbReference type="EC" id="4.4.1.22"/>
    </reaction>
</comment>
<comment type="cofactor">
    <cofactor evidence="1 2">
        <name>Zn(2+)</name>
        <dbReference type="ChEBI" id="CHEBI:29105"/>
    </cofactor>
    <text evidence="1 2">Binds 2 Zn(2+) ions per subunit.</text>
</comment>
<comment type="pathway">
    <text evidence="1">One-carbon metabolism; formaldehyde degradation; formate from formaldehyde (glutathione route): step 1/3.</text>
</comment>
<comment type="similarity">
    <text evidence="3">Belongs to the Gfa family.</text>
</comment>
<comment type="sequence caution" evidence="3">
    <conflict type="erroneous gene model prediction">
        <sequence resource="EMBL-CDS" id="EAA61572"/>
    </conflict>
</comment>
<accession>C8VDQ3</accession>
<accession>Q5AV96</accession>
<feature type="chain" id="PRO_0000406157" description="Putative glutathione-dependent formaldehyde-activating enzyme">
    <location>
        <begin position="1"/>
        <end position="197"/>
    </location>
</feature>
<feature type="domain" description="CENP-V/GFA" evidence="2">
    <location>
        <begin position="22"/>
        <end position="171"/>
    </location>
</feature>
<feature type="binding site" evidence="1 2">
    <location>
        <position position="29"/>
    </location>
    <ligand>
        <name>Zn(2+)</name>
        <dbReference type="ChEBI" id="CHEBI:29105"/>
        <label>1</label>
        <note>structural</note>
    </ligand>
</feature>
<feature type="binding site" evidence="1 2">
    <location>
        <position position="31"/>
    </location>
    <ligand>
        <name>Zn(2+)</name>
        <dbReference type="ChEBI" id="CHEBI:29105"/>
        <label>1</label>
        <note>structural</note>
    </ligand>
</feature>
<feature type="binding site" evidence="1 2">
    <location>
        <position position="50"/>
    </location>
    <ligand>
        <name>Zn(2+)</name>
        <dbReference type="ChEBI" id="CHEBI:29105"/>
        <label>2</label>
        <note>catalytic</note>
    </ligand>
</feature>
<feature type="binding site" evidence="1 2">
    <location>
        <position position="52"/>
    </location>
    <ligand>
        <name>Zn(2+)</name>
        <dbReference type="ChEBI" id="CHEBI:29105"/>
        <label>2</label>
        <note>catalytic</note>
    </ligand>
</feature>
<feature type="binding site" evidence="1 2">
    <location>
        <position position="55"/>
    </location>
    <ligand>
        <name>Zn(2+)</name>
        <dbReference type="ChEBI" id="CHEBI:29105"/>
        <label>2</label>
        <note>catalytic</note>
    </ligand>
</feature>
<feature type="binding site" evidence="1 2">
    <location>
        <position position="97"/>
    </location>
    <ligand>
        <name>Zn(2+)</name>
        <dbReference type="ChEBI" id="CHEBI:29105"/>
        <label>1</label>
        <note>structural</note>
    </ligand>
</feature>
<feature type="binding site" evidence="1 2">
    <location>
        <position position="100"/>
    </location>
    <ligand>
        <name>Zn(2+)</name>
        <dbReference type="ChEBI" id="CHEBI:29105"/>
        <label>1</label>
        <note>structural</note>
    </ligand>
</feature>